<dbReference type="EMBL" id="CP000825">
    <property type="protein sequence ID" value="ABV51186.1"/>
    <property type="molecule type" value="Genomic_DNA"/>
</dbReference>
<dbReference type="RefSeq" id="WP_012008225.1">
    <property type="nucleotide sequence ID" value="NC_009840.1"/>
</dbReference>
<dbReference type="SMR" id="A8G6F5"/>
<dbReference type="STRING" id="93060.P9215_15731"/>
<dbReference type="KEGG" id="pmh:P9215_15731"/>
<dbReference type="eggNOG" id="COG0261">
    <property type="taxonomic scope" value="Bacteria"/>
</dbReference>
<dbReference type="HOGENOM" id="CLU_061463_6_0_3"/>
<dbReference type="OrthoDB" id="9813334at2"/>
<dbReference type="Proteomes" id="UP000002014">
    <property type="component" value="Chromosome"/>
</dbReference>
<dbReference type="GO" id="GO:0005737">
    <property type="term" value="C:cytoplasm"/>
    <property type="evidence" value="ECO:0007669"/>
    <property type="project" value="UniProtKB-ARBA"/>
</dbReference>
<dbReference type="GO" id="GO:1990904">
    <property type="term" value="C:ribonucleoprotein complex"/>
    <property type="evidence" value="ECO:0007669"/>
    <property type="project" value="UniProtKB-KW"/>
</dbReference>
<dbReference type="GO" id="GO:0005840">
    <property type="term" value="C:ribosome"/>
    <property type="evidence" value="ECO:0007669"/>
    <property type="project" value="UniProtKB-KW"/>
</dbReference>
<dbReference type="GO" id="GO:0019843">
    <property type="term" value="F:rRNA binding"/>
    <property type="evidence" value="ECO:0007669"/>
    <property type="project" value="UniProtKB-UniRule"/>
</dbReference>
<dbReference type="GO" id="GO:0003735">
    <property type="term" value="F:structural constituent of ribosome"/>
    <property type="evidence" value="ECO:0007669"/>
    <property type="project" value="InterPro"/>
</dbReference>
<dbReference type="GO" id="GO:0006412">
    <property type="term" value="P:translation"/>
    <property type="evidence" value="ECO:0007669"/>
    <property type="project" value="UniProtKB-UniRule"/>
</dbReference>
<dbReference type="HAMAP" id="MF_01363">
    <property type="entry name" value="Ribosomal_bL21"/>
    <property type="match status" value="1"/>
</dbReference>
<dbReference type="InterPro" id="IPR028909">
    <property type="entry name" value="bL21-like"/>
</dbReference>
<dbReference type="InterPro" id="IPR036164">
    <property type="entry name" value="bL21-like_sf"/>
</dbReference>
<dbReference type="InterPro" id="IPR001787">
    <property type="entry name" value="Ribosomal_bL21"/>
</dbReference>
<dbReference type="InterPro" id="IPR018258">
    <property type="entry name" value="Ribosomal_bL21_CS"/>
</dbReference>
<dbReference type="NCBIfam" id="TIGR00061">
    <property type="entry name" value="L21"/>
    <property type="match status" value="1"/>
</dbReference>
<dbReference type="PANTHER" id="PTHR21349">
    <property type="entry name" value="50S RIBOSOMAL PROTEIN L21"/>
    <property type="match status" value="1"/>
</dbReference>
<dbReference type="PANTHER" id="PTHR21349:SF0">
    <property type="entry name" value="LARGE RIBOSOMAL SUBUNIT PROTEIN BL21M"/>
    <property type="match status" value="1"/>
</dbReference>
<dbReference type="Pfam" id="PF00829">
    <property type="entry name" value="Ribosomal_L21p"/>
    <property type="match status" value="1"/>
</dbReference>
<dbReference type="SUPFAM" id="SSF141091">
    <property type="entry name" value="L21p-like"/>
    <property type="match status" value="1"/>
</dbReference>
<dbReference type="PROSITE" id="PS01169">
    <property type="entry name" value="RIBOSOMAL_L21"/>
    <property type="match status" value="1"/>
</dbReference>
<evidence type="ECO:0000255" key="1">
    <source>
        <dbReference type="HAMAP-Rule" id="MF_01363"/>
    </source>
</evidence>
<evidence type="ECO:0000256" key="2">
    <source>
        <dbReference type="SAM" id="MobiDB-lite"/>
    </source>
</evidence>
<evidence type="ECO:0000305" key="3"/>
<accession>A8G6F5</accession>
<organism>
    <name type="scientific">Prochlorococcus marinus (strain MIT 9215)</name>
    <dbReference type="NCBI Taxonomy" id="93060"/>
    <lineage>
        <taxon>Bacteria</taxon>
        <taxon>Bacillati</taxon>
        <taxon>Cyanobacteriota</taxon>
        <taxon>Cyanophyceae</taxon>
        <taxon>Synechococcales</taxon>
        <taxon>Prochlorococcaceae</taxon>
        <taxon>Prochlorococcus</taxon>
    </lineage>
</organism>
<protein>
    <recommendedName>
        <fullName evidence="1">Large ribosomal subunit protein bL21</fullName>
    </recommendedName>
    <alternativeName>
        <fullName evidence="3">50S ribosomal protein L21</fullName>
    </alternativeName>
</protein>
<proteinExistence type="inferred from homology"/>
<reference key="1">
    <citation type="journal article" date="2007" name="PLoS Genet.">
        <title>Patterns and implications of gene gain and loss in the evolution of Prochlorococcus.</title>
        <authorList>
            <person name="Kettler G.C."/>
            <person name="Martiny A.C."/>
            <person name="Huang K."/>
            <person name="Zucker J."/>
            <person name="Coleman M.L."/>
            <person name="Rodrigue S."/>
            <person name="Chen F."/>
            <person name="Lapidus A."/>
            <person name="Ferriera S."/>
            <person name="Johnson J."/>
            <person name="Steglich C."/>
            <person name="Church G.M."/>
            <person name="Richardson P."/>
            <person name="Chisholm S.W."/>
        </authorList>
    </citation>
    <scope>NUCLEOTIDE SEQUENCE [LARGE SCALE GENOMIC DNA]</scope>
    <source>
        <strain>MIT 9215</strain>
    </source>
</reference>
<comment type="function">
    <text evidence="1">This protein binds to 23S rRNA in the presence of protein L20.</text>
</comment>
<comment type="subunit">
    <text evidence="1">Part of the 50S ribosomal subunit. Contacts protein L20.</text>
</comment>
<comment type="similarity">
    <text evidence="1">Belongs to the bacterial ribosomal protein bL21 family.</text>
</comment>
<name>RL21_PROM2</name>
<gene>
    <name evidence="1" type="primary">rplU</name>
    <name evidence="1" type="synonym">rpl21</name>
    <name type="ordered locus">P9215_15731</name>
</gene>
<keyword id="KW-0687">Ribonucleoprotein</keyword>
<keyword id="KW-0689">Ribosomal protein</keyword>
<keyword id="KW-0694">RNA-binding</keyword>
<keyword id="KW-0699">rRNA-binding</keyword>
<feature type="chain" id="PRO_1000067873" description="Large ribosomal subunit protein bL21">
    <location>
        <begin position="1"/>
        <end position="147"/>
    </location>
</feature>
<feature type="region of interest" description="Disordered" evidence="2">
    <location>
        <begin position="115"/>
        <end position="147"/>
    </location>
</feature>
<feature type="compositionally biased region" description="Basic and acidic residues" evidence="2">
    <location>
        <begin position="128"/>
        <end position="147"/>
    </location>
</feature>
<sequence>MTNSKKSSNNSLKNHELYAIAETSGQQFWFEVNRYYDIDRLKAKEKDKITLDKVLLLKDKDSITVGKPYVKDAKIELEVVSHKRDKKILVYKMRPKKKTRRKMGHRQELTRVMVKSIKVGKPTPKSSSKKEETVKKETKPKSEKSTN</sequence>